<gene>
    <name evidence="1" type="primary">RPS1</name>
    <name type="ORF">BDCG_07060</name>
</gene>
<name>RS3A_AJEDR</name>
<organism>
    <name type="scientific">Ajellomyces dermatitidis (strain ER-3 / ATCC MYA-2586)</name>
    <name type="common">Blastomyces dermatitidis</name>
    <dbReference type="NCBI Taxonomy" id="559297"/>
    <lineage>
        <taxon>Eukaryota</taxon>
        <taxon>Fungi</taxon>
        <taxon>Dikarya</taxon>
        <taxon>Ascomycota</taxon>
        <taxon>Pezizomycotina</taxon>
        <taxon>Eurotiomycetes</taxon>
        <taxon>Eurotiomycetidae</taxon>
        <taxon>Onygenales</taxon>
        <taxon>Ajellomycetaceae</taxon>
        <taxon>Blastomyces</taxon>
    </lineage>
</organism>
<accession>C5GS07</accession>
<evidence type="ECO:0000255" key="1">
    <source>
        <dbReference type="HAMAP-Rule" id="MF_03122"/>
    </source>
</evidence>
<evidence type="ECO:0000256" key="2">
    <source>
        <dbReference type="SAM" id="MobiDB-lite"/>
    </source>
</evidence>
<evidence type="ECO:0000305" key="3"/>
<dbReference type="EMBL" id="EQ999980">
    <property type="protein sequence ID" value="EEQ91940.1"/>
    <property type="molecule type" value="Genomic_DNA"/>
</dbReference>
<dbReference type="SMR" id="C5GS07"/>
<dbReference type="STRING" id="559297.C5GS07"/>
<dbReference type="VEuPathDB" id="FungiDB:BDCG_07060"/>
<dbReference type="eggNOG" id="KOG1628">
    <property type="taxonomic scope" value="Eukaryota"/>
</dbReference>
<dbReference type="HOGENOM" id="CLU_062507_0_0_1"/>
<dbReference type="OMA" id="TRFKGHE"/>
<dbReference type="GO" id="GO:0022627">
    <property type="term" value="C:cytosolic small ribosomal subunit"/>
    <property type="evidence" value="ECO:0007669"/>
    <property type="project" value="UniProtKB-UniRule"/>
</dbReference>
<dbReference type="GO" id="GO:0003735">
    <property type="term" value="F:structural constituent of ribosome"/>
    <property type="evidence" value="ECO:0007669"/>
    <property type="project" value="UniProtKB-UniRule"/>
</dbReference>
<dbReference type="GO" id="GO:0006412">
    <property type="term" value="P:translation"/>
    <property type="evidence" value="ECO:0007669"/>
    <property type="project" value="UniProtKB-UniRule"/>
</dbReference>
<dbReference type="HAMAP" id="MF_03122">
    <property type="entry name" value="Ribosomal_eS1_euk"/>
    <property type="match status" value="1"/>
</dbReference>
<dbReference type="InterPro" id="IPR001593">
    <property type="entry name" value="Ribosomal_eS1"/>
</dbReference>
<dbReference type="InterPro" id="IPR018281">
    <property type="entry name" value="Ribosomal_eS1_CS"/>
</dbReference>
<dbReference type="InterPro" id="IPR027500">
    <property type="entry name" value="Ribosomal_eS1_euk"/>
</dbReference>
<dbReference type="PANTHER" id="PTHR11830">
    <property type="entry name" value="40S RIBOSOMAL PROTEIN S3A"/>
    <property type="match status" value="1"/>
</dbReference>
<dbReference type="Pfam" id="PF01015">
    <property type="entry name" value="Ribosomal_S3Ae"/>
    <property type="match status" value="1"/>
</dbReference>
<dbReference type="SMART" id="SM01397">
    <property type="entry name" value="Ribosomal_S3Ae"/>
    <property type="match status" value="1"/>
</dbReference>
<dbReference type="PROSITE" id="PS01191">
    <property type="entry name" value="RIBOSOMAL_S3AE"/>
    <property type="match status" value="1"/>
</dbReference>
<protein>
    <recommendedName>
        <fullName evidence="1">Small ribosomal subunit protein eS1</fullName>
    </recommendedName>
    <alternativeName>
        <fullName evidence="3">40S ribosomal protein S1</fullName>
    </alternativeName>
</protein>
<keyword id="KW-0007">Acetylation</keyword>
<keyword id="KW-0963">Cytoplasm</keyword>
<keyword id="KW-0687">Ribonucleoprotein</keyword>
<keyword id="KW-0689">Ribosomal protein</keyword>
<proteinExistence type="inferred from homology"/>
<feature type="initiator methionine" description="Removed" evidence="1">
    <location>
        <position position="1"/>
    </location>
</feature>
<feature type="chain" id="PRO_0000389353" description="Small ribosomal subunit protein eS1">
    <location>
        <begin position="2"/>
        <end position="255"/>
    </location>
</feature>
<feature type="region of interest" description="Disordered" evidence="2">
    <location>
        <begin position="1"/>
        <end position="28"/>
    </location>
</feature>
<feature type="compositionally biased region" description="Basic residues" evidence="2">
    <location>
        <begin position="1"/>
        <end position="18"/>
    </location>
</feature>
<feature type="compositionally biased region" description="Basic and acidic residues" evidence="2">
    <location>
        <begin position="19"/>
        <end position="28"/>
    </location>
</feature>
<feature type="modified residue" description="N-acetylalanine; partial" evidence="1">
    <location>
        <position position="2"/>
    </location>
</feature>
<reference key="1">
    <citation type="journal article" date="2015" name="PLoS Genet.">
        <title>The dynamic genome and transcriptome of the human fungal pathogen Blastomyces and close relative Emmonsia.</title>
        <authorList>
            <person name="Munoz J.F."/>
            <person name="Gauthier G.M."/>
            <person name="Desjardins C.A."/>
            <person name="Gallo J.E."/>
            <person name="Holder J."/>
            <person name="Sullivan T.D."/>
            <person name="Marty A.J."/>
            <person name="Carmen J.C."/>
            <person name="Chen Z."/>
            <person name="Ding L."/>
            <person name="Gujja S."/>
            <person name="Magrini V."/>
            <person name="Misas E."/>
            <person name="Mitreva M."/>
            <person name="Priest M."/>
            <person name="Saif S."/>
            <person name="Whiston E.A."/>
            <person name="Young S."/>
            <person name="Zeng Q."/>
            <person name="Goldman W.E."/>
            <person name="Mardis E.R."/>
            <person name="Taylor J.W."/>
            <person name="McEwen J.G."/>
            <person name="Clay O.K."/>
            <person name="Klein B.S."/>
            <person name="Cuomo C.A."/>
        </authorList>
    </citation>
    <scope>NUCLEOTIDE SEQUENCE [LARGE SCALE GENOMIC DNA]</scope>
    <source>
        <strain>ER-3 / ATCC MYA-2586</strain>
    </source>
</reference>
<sequence>MAVGKNKRLSKGKKGLKKRTQDPFSRKDEYSVKAPSTFAIRDVGKTLVNRTTGLKNANDSLKGRIFEVSLADLQNDEDHAFRKVKLRVDEVQGKNCLTNFHGLDFTSDKLRSLVRKWQTLIEANVTVKTTDDYLLRLFAIAFTKRRPNQIKKTTYARSSQIRAIRKKITEIIQREASTRTLAQLTKLIPEVIGREIEKATHGIYPLQNVHIRKVKLLKSPKFDLGALLALHGESSTDDKGQKVEREFKEQVLESV</sequence>
<comment type="subunit">
    <text evidence="1">Component of the small ribosomal subunit. Mature ribosomes consist of a small (40S) and a large (60S) subunit. The 40S subunit contains about 33 different proteins and 1 molecule of RNA (18S). The 60S subunit contains about 49 different proteins and 3 molecules of RNA (25S, 5.8S and 5S).</text>
</comment>
<comment type="subcellular location">
    <subcellularLocation>
        <location evidence="1">Cytoplasm</location>
    </subcellularLocation>
</comment>
<comment type="similarity">
    <text evidence="1">Belongs to the eukaryotic ribosomal protein eS1 family.</text>
</comment>